<comment type="function">
    <text evidence="1">The fumarate reductase enzyme complex is required for fumarate respiration. This subunit anchors the complex in the membrane and binds a diheme cytochrome b.</text>
</comment>
<comment type="cofactor">
    <cofactor evidence="1">
        <name>heme b</name>
        <dbReference type="ChEBI" id="CHEBI:60344"/>
    </cofactor>
    <text evidence="1">Binds 2 heme b molecules per subunit, called the proximal (bP) and distal (bD) hemes.</text>
</comment>
<comment type="subunit">
    <text evidence="1">Part of an enzyme complex containing three subunits: a flavoprotein (frdA), an iron-sulfur protein (frdB), and diheme cytochrome b (frdC).</text>
</comment>
<comment type="subcellular location">
    <subcellularLocation>
        <location evidence="2">Cell inner membrane</location>
        <topology evidence="1">Multi-pass membrane protein</topology>
    </subcellularLocation>
</comment>
<comment type="similarity">
    <text evidence="3">Belongs to the diheme cytochrome b FrdC family.</text>
</comment>
<accession>O06912</accession>
<dbReference type="EMBL" id="U78101">
    <property type="protein sequence ID" value="AAC46063.1"/>
    <property type="molecule type" value="Genomic_DNA"/>
</dbReference>
<dbReference type="EMBL" id="AE000511">
    <property type="protein sequence ID" value="AAD07260.1"/>
    <property type="molecule type" value="Genomic_DNA"/>
</dbReference>
<dbReference type="PIR" id="A64544">
    <property type="entry name" value="A64544"/>
</dbReference>
<dbReference type="RefSeq" id="NP_206992.1">
    <property type="nucleotide sequence ID" value="NC_000915.1"/>
</dbReference>
<dbReference type="RefSeq" id="WP_001183634.1">
    <property type="nucleotide sequence ID" value="NC_018939.1"/>
</dbReference>
<dbReference type="SMR" id="O06912"/>
<dbReference type="STRING" id="85962.HP_0193"/>
<dbReference type="PaxDb" id="85962-C694_00960"/>
<dbReference type="EnsemblBacteria" id="AAD07260">
    <property type="protein sequence ID" value="AAD07260"/>
    <property type="gene ID" value="HP_0193"/>
</dbReference>
<dbReference type="KEGG" id="heo:C694_00960"/>
<dbReference type="KEGG" id="hpy:HP_0193"/>
<dbReference type="PATRIC" id="fig|85962.47.peg.208"/>
<dbReference type="eggNOG" id="ENOG5031HUY">
    <property type="taxonomic scope" value="Bacteria"/>
</dbReference>
<dbReference type="InParanoid" id="O06912"/>
<dbReference type="OrthoDB" id="5345350at2"/>
<dbReference type="PhylomeDB" id="O06912"/>
<dbReference type="BioCyc" id="MetaCyc:HP0193-MONOMER"/>
<dbReference type="Proteomes" id="UP000000429">
    <property type="component" value="Chromosome"/>
</dbReference>
<dbReference type="GO" id="GO:0005886">
    <property type="term" value="C:plasma membrane"/>
    <property type="evidence" value="ECO:0007669"/>
    <property type="project" value="UniProtKB-SubCell"/>
</dbReference>
<dbReference type="GO" id="GO:0046872">
    <property type="term" value="F:metal ion binding"/>
    <property type="evidence" value="ECO:0007669"/>
    <property type="project" value="UniProtKB-KW"/>
</dbReference>
<dbReference type="GO" id="GO:0006099">
    <property type="term" value="P:tricarboxylic acid cycle"/>
    <property type="evidence" value="ECO:0007669"/>
    <property type="project" value="UniProtKB-KW"/>
</dbReference>
<dbReference type="CDD" id="cd00581">
    <property type="entry name" value="QFR_TypeB_TM"/>
    <property type="match status" value="1"/>
</dbReference>
<dbReference type="Gene3D" id="1.20.1300.10">
    <property type="entry name" value="Fumarate reductase/succinate dehydrogenase, transmembrane subunit"/>
    <property type="match status" value="1"/>
</dbReference>
<dbReference type="InterPro" id="IPR004224">
    <property type="entry name" value="Fum_red_B_TM"/>
</dbReference>
<dbReference type="InterPro" id="IPR034804">
    <property type="entry name" value="SQR/QFR_C/D"/>
</dbReference>
<dbReference type="InterPro" id="IPR000701">
    <property type="entry name" value="SuccDH_FuR_B_TM-su"/>
</dbReference>
<dbReference type="NCBIfam" id="NF010072">
    <property type="entry name" value="PRK13553.1"/>
    <property type="match status" value="1"/>
</dbReference>
<dbReference type="Pfam" id="PF01127">
    <property type="entry name" value="Sdh_cyt"/>
    <property type="match status" value="1"/>
</dbReference>
<dbReference type="PIRSF" id="PIRSF000177">
    <property type="entry name" value="Fumar_rd_cyt_b"/>
    <property type="match status" value="1"/>
</dbReference>
<dbReference type="SUPFAM" id="SSF81343">
    <property type="entry name" value="Fumarate reductase respiratory complex transmembrane subunits"/>
    <property type="match status" value="1"/>
</dbReference>
<protein>
    <recommendedName>
        <fullName>Fumarate reductase cytochrome b subunit</fullName>
    </recommendedName>
    <alternativeName>
        <fullName evidence="3">Quinol-fumarate reductase cytochrome b subunit</fullName>
        <shortName evidence="3">QFR cytochrome b subunit</shortName>
    </alternativeName>
</protein>
<keyword id="KW-0997">Cell inner membrane</keyword>
<keyword id="KW-1003">Cell membrane</keyword>
<keyword id="KW-0249">Electron transport</keyword>
<keyword id="KW-0349">Heme</keyword>
<keyword id="KW-0408">Iron</keyword>
<keyword id="KW-0472">Membrane</keyword>
<keyword id="KW-0479">Metal-binding</keyword>
<keyword id="KW-1185">Reference proteome</keyword>
<keyword id="KW-0812">Transmembrane</keyword>
<keyword id="KW-1133">Transmembrane helix</keyword>
<keyword id="KW-0813">Transport</keyword>
<keyword id="KW-0816">Tricarboxylic acid cycle</keyword>
<name>FRDC_HELPY</name>
<gene>
    <name type="primary">frdC</name>
    <name type="ordered locus">HP_0193</name>
</gene>
<feature type="chain" id="PRO_0000158683" description="Fumarate reductase cytochrome b subunit">
    <location>
        <begin position="1"/>
        <end position="255"/>
    </location>
</feature>
<feature type="transmembrane region" description="Helical" evidence="2">
    <location>
        <begin position="33"/>
        <end position="53"/>
    </location>
</feature>
<feature type="transmembrane region" description="Helical" evidence="2">
    <location>
        <begin position="78"/>
        <end position="98"/>
    </location>
</feature>
<feature type="transmembrane region" description="Helical" evidence="2">
    <location>
        <begin position="126"/>
        <end position="146"/>
    </location>
</feature>
<feature type="transmembrane region" description="Helical" evidence="2">
    <location>
        <begin position="168"/>
        <end position="188"/>
    </location>
</feature>
<feature type="transmembrane region" description="Helical" evidence="2">
    <location>
        <begin position="208"/>
        <end position="228"/>
    </location>
</feature>
<feature type="binding site" description="axial binding residue" evidence="1">
    <location>
        <position position="44"/>
    </location>
    <ligand>
        <name>heme b</name>
        <dbReference type="ChEBI" id="CHEBI:60344"/>
        <label>bD</label>
    </ligand>
    <ligandPart>
        <name>Fe</name>
        <dbReference type="ChEBI" id="CHEBI:18248"/>
    </ligandPart>
</feature>
<feature type="binding site" description="axial binding residue" evidence="1">
    <location>
        <position position="93"/>
    </location>
    <ligand>
        <name>heme b</name>
        <dbReference type="ChEBI" id="CHEBI:60344"/>
        <label>bP</label>
    </ligand>
    <ligandPart>
        <name>Fe</name>
        <dbReference type="ChEBI" id="CHEBI:18248"/>
    </ligandPart>
</feature>
<feature type="binding site" description="axial binding residue" evidence="1">
    <location>
        <position position="143"/>
    </location>
    <ligand>
        <name>heme b</name>
        <dbReference type="ChEBI" id="CHEBI:60344"/>
        <label>bD</label>
    </ligand>
    <ligandPart>
        <name>Fe</name>
        <dbReference type="ChEBI" id="CHEBI:18248"/>
    </ligandPart>
</feature>
<feature type="binding site" description="axial binding residue" evidence="1">
    <location>
        <position position="182"/>
    </location>
    <ligand>
        <name>heme b</name>
        <dbReference type="ChEBI" id="CHEBI:60344"/>
        <label>bP</label>
    </ligand>
    <ligandPart>
        <name>Fe</name>
        <dbReference type="ChEBI" id="CHEBI:18248"/>
    </ligandPart>
</feature>
<feature type="sequence conflict" description="In Ref. 1; AAC46063." evidence="3" ref="1">
    <original>I</original>
    <variation>V</variation>
    <location>
        <position position="86"/>
    </location>
</feature>
<feature type="sequence conflict" description="In Ref. 1; AAC46063." evidence="3" ref="1">
    <original>L</original>
    <variation>V</variation>
    <location>
        <position position="90"/>
    </location>
</feature>
<feature type="sequence conflict" description="In Ref. 1; AAC46063." evidence="3" ref="1">
    <original>V</original>
    <variation>A</variation>
    <location>
        <position position="200"/>
    </location>
</feature>
<feature type="sequence conflict" description="In Ref. 1; AAC46063." evidence="3" ref="1">
    <original>E</original>
    <variation>D</variation>
    <location>
        <position position="236"/>
    </location>
</feature>
<evidence type="ECO:0000250" key="1">
    <source>
        <dbReference type="UniProtKB" id="P17413"/>
    </source>
</evidence>
<evidence type="ECO:0000255" key="2"/>
<evidence type="ECO:0000305" key="3"/>
<reference key="1">
    <citation type="journal article" date="1997" name="Gene">
        <title>Cloning and functional characterization of Helicobacter pylori fumarate reductase operon comprising three structural genes coding for subunits C, A and B.</title>
        <authorList>
            <person name="Ge Z."/>
            <person name="Jiang Q."/>
            <person name="Kalisiak M.S."/>
            <person name="Taylor D.E."/>
        </authorList>
    </citation>
    <scope>NUCLEOTIDE SEQUENCE [GENOMIC DNA]</scope>
    <source>
        <strain>ATCC 43629 / JCM 7656 / NCTC 11639 / UA802</strain>
    </source>
</reference>
<reference key="2">
    <citation type="journal article" date="1997" name="Nature">
        <title>The complete genome sequence of the gastric pathogen Helicobacter pylori.</title>
        <authorList>
            <person name="Tomb J.-F."/>
            <person name="White O."/>
            <person name="Kerlavage A.R."/>
            <person name="Clayton R.A."/>
            <person name="Sutton G.G."/>
            <person name="Fleischmann R.D."/>
            <person name="Ketchum K.A."/>
            <person name="Klenk H.-P."/>
            <person name="Gill S.R."/>
            <person name="Dougherty B.A."/>
            <person name="Nelson K.E."/>
            <person name="Quackenbush J."/>
            <person name="Zhou L."/>
            <person name="Kirkness E.F."/>
            <person name="Peterson S.N."/>
            <person name="Loftus B.J."/>
            <person name="Richardson D.L."/>
            <person name="Dodson R.J."/>
            <person name="Khalak H.G."/>
            <person name="Glodek A."/>
            <person name="McKenney K."/>
            <person name="FitzGerald L.M."/>
            <person name="Lee N."/>
            <person name="Adams M.D."/>
            <person name="Hickey E.K."/>
            <person name="Berg D.E."/>
            <person name="Gocayne J.D."/>
            <person name="Utterback T.R."/>
            <person name="Peterson J.D."/>
            <person name="Kelley J.M."/>
            <person name="Cotton M.D."/>
            <person name="Weidman J.F."/>
            <person name="Fujii C."/>
            <person name="Bowman C."/>
            <person name="Watthey L."/>
            <person name="Wallin E."/>
            <person name="Hayes W.S."/>
            <person name="Borodovsky M."/>
            <person name="Karp P.D."/>
            <person name="Smith H.O."/>
            <person name="Fraser C.M."/>
            <person name="Venter J.C."/>
        </authorList>
    </citation>
    <scope>NUCLEOTIDE SEQUENCE [LARGE SCALE GENOMIC DNA]</scope>
    <source>
        <strain>ATCC 700392 / 26695</strain>
    </source>
</reference>
<proteinExistence type="inferred from homology"/>
<sequence length="255" mass="28886">MQQEEIIEGYYGASKGLKKSGIYAKLDFLQSATGLILALFMIAHMFLVSSILISDEAMYKVAKFFEGSLFLKAGEPAIVSVVAAGIILILVAHAFLALRKFPINYRQYKVFKTHKHLMKHGDTSLWFIQALTGFAMFFLASIHLFVMLTEPESIGPHGSSYRFVTQNFWLLYIFLLFAVELHGSIGLYRLAIKWGWFKNVSIQGLRKVKWAMSVFFIVLGLCTYGAYIKKGLENKENGIKTMQEAIEADGKFHKE</sequence>
<organism>
    <name type="scientific">Helicobacter pylori (strain ATCC 700392 / 26695)</name>
    <name type="common">Campylobacter pylori</name>
    <dbReference type="NCBI Taxonomy" id="85962"/>
    <lineage>
        <taxon>Bacteria</taxon>
        <taxon>Pseudomonadati</taxon>
        <taxon>Campylobacterota</taxon>
        <taxon>Epsilonproteobacteria</taxon>
        <taxon>Campylobacterales</taxon>
        <taxon>Helicobacteraceae</taxon>
        <taxon>Helicobacter</taxon>
    </lineage>
</organism>